<comment type="function">
    <text>Increases the production of several extracellular enzymes, like alkaline phosphatase, amylase, protease or lipase. When present in high concentrations, delays the production of pigments and sporulation.</text>
</comment>
<sequence>MSRRRRRASATRRSAAVSPPHTPYGSGCISACSWHSTITGHRAQTRLAASSRASRAAVGSFDGAKNRPASSRRQAASECQGPASSSRAGVRWAGTAANGRG</sequence>
<feature type="chain" id="PRO_0000097566" description="Secreted enzymes activator">
    <location>
        <begin position="1"/>
        <end position="101"/>
    </location>
</feature>
<feature type="DNA-binding region" description="H-T-H motif" evidence="1">
    <location>
        <begin position="55"/>
        <end position="74"/>
    </location>
</feature>
<feature type="region of interest" description="Disordered" evidence="2">
    <location>
        <begin position="1"/>
        <end position="26"/>
    </location>
</feature>
<feature type="region of interest" description="Disordered" evidence="2">
    <location>
        <begin position="45"/>
        <end position="101"/>
    </location>
</feature>
<feature type="compositionally biased region" description="Basic residues" evidence="2">
    <location>
        <begin position="1"/>
        <end position="10"/>
    </location>
</feature>
<feature type="compositionally biased region" description="Low complexity" evidence="2">
    <location>
        <begin position="45"/>
        <end position="60"/>
    </location>
</feature>
<dbReference type="EMBL" id="X55551">
    <property type="protein sequence ID" value="CAA39157.1"/>
    <property type="molecule type" value="Genomic_DNA"/>
</dbReference>
<dbReference type="PIR" id="S11936">
    <property type="entry name" value="S11936"/>
</dbReference>
<dbReference type="GO" id="GO:0003677">
    <property type="term" value="F:DNA binding"/>
    <property type="evidence" value="ECO:0007669"/>
    <property type="project" value="UniProtKB-KW"/>
</dbReference>
<proteinExistence type="predicted"/>
<evidence type="ECO:0000255" key="1"/>
<evidence type="ECO:0000256" key="2">
    <source>
        <dbReference type="SAM" id="MobiDB-lite"/>
    </source>
</evidence>
<gene>
    <name type="primary">saf</name>
</gene>
<organism>
    <name type="scientific">Streptomyces griseus</name>
    <dbReference type="NCBI Taxonomy" id="1911"/>
    <lineage>
        <taxon>Bacteria</taxon>
        <taxon>Bacillati</taxon>
        <taxon>Actinomycetota</taxon>
        <taxon>Actinomycetes</taxon>
        <taxon>Kitasatosporales</taxon>
        <taxon>Streptomycetaceae</taxon>
        <taxon>Streptomyces</taxon>
    </lineage>
</organism>
<name>SAF_STRGR</name>
<reference key="1">
    <citation type="journal article" date="1990" name="Mol. Gen. Genet.">
        <title>Cloning and characterization of a gene of Streptomyces griseus that increases production of extracellular enzymes in several species of Streptomyces.</title>
        <authorList>
            <person name="Daza A."/>
            <person name="Gil J.A."/>
            <person name="Vigal T."/>
            <person name="Martin J.F."/>
        </authorList>
    </citation>
    <scope>NUCLEOTIDE SEQUENCE [GENOMIC DNA]</scope>
    <source>
        <strain>ATCC 10137 / DSM 40855 / NBRC 3430 / NCIMB 8232 / NCTC 6961 / IMRU 3496</strain>
    </source>
</reference>
<protein>
    <recommendedName>
        <fullName>Secreted enzymes activator</fullName>
    </recommendedName>
</protein>
<accession>P55109</accession>
<keyword id="KW-0010">Activator</keyword>
<keyword id="KW-0238">DNA-binding</keyword>
<keyword id="KW-0804">Transcription</keyword>
<keyword id="KW-0805">Transcription regulation</keyword>